<organism>
    <name type="scientific">Nostoc punctiforme (strain ATCC 29133 / PCC 73102)</name>
    <dbReference type="NCBI Taxonomy" id="63737"/>
    <lineage>
        <taxon>Bacteria</taxon>
        <taxon>Bacillati</taxon>
        <taxon>Cyanobacteriota</taxon>
        <taxon>Cyanophyceae</taxon>
        <taxon>Nostocales</taxon>
        <taxon>Nostocaceae</taxon>
        <taxon>Nostoc</taxon>
    </lineage>
</organism>
<sequence length="481" mass="52245">MTNSVDFSGRPFHFIGIGGIGMSALAYVLAKRQFPVSGSDLRPNHITHKLESIGAHIFGRQEASNLEFFRPQVLNSQEQLAADTKSKLPQVICSTAINTNNLEYKAALELGCPVLHRSDVLAALIADYYSIAVAGTHGKTTTSSMIGYMLLEAGLDPTILVGGEVNAWEGNARLGQSQYLVAEADESDGSLVKHAPEIGIITNIELDHPDHYDTLEEVIDIFQTFAKGCKTLIGSIDCATVRDRLQPTISYSLHSDTDADYTVTNIDYRADGTTALVWERGKALGVLKLRLLSRHNLSNALAAVAVGRALGLEFGAIAKGIATFEGARRRFELRGEVDGITFIDDYAHHPSEIRVTLAAARLQARPGQRVVAIFQPHRYSRTLTFLEEFAESFTHADLVVLTDIYSAGEPNLGQITGEQLAAEIAKQHSQVVYQPTLPSVCEYLLQTLRPGDLALFLGAGNLNQVIPEVITAFCEPAKATS</sequence>
<keyword id="KW-0067">ATP-binding</keyword>
<keyword id="KW-0131">Cell cycle</keyword>
<keyword id="KW-0132">Cell division</keyword>
<keyword id="KW-0133">Cell shape</keyword>
<keyword id="KW-0961">Cell wall biogenesis/degradation</keyword>
<keyword id="KW-0963">Cytoplasm</keyword>
<keyword id="KW-0436">Ligase</keyword>
<keyword id="KW-0547">Nucleotide-binding</keyword>
<keyword id="KW-0573">Peptidoglycan synthesis</keyword>
<keyword id="KW-1185">Reference proteome</keyword>
<dbReference type="EC" id="6.3.2.8" evidence="1"/>
<dbReference type="EMBL" id="CP001037">
    <property type="protein sequence ID" value="ACC79225.1"/>
    <property type="molecule type" value="Genomic_DNA"/>
</dbReference>
<dbReference type="RefSeq" id="WP_012407251.1">
    <property type="nucleotide sequence ID" value="NC_010628.1"/>
</dbReference>
<dbReference type="SMR" id="B2J717"/>
<dbReference type="STRING" id="63737.Npun_F0446"/>
<dbReference type="EnsemblBacteria" id="ACC79225">
    <property type="protein sequence ID" value="ACC79225"/>
    <property type="gene ID" value="Npun_F0446"/>
</dbReference>
<dbReference type="KEGG" id="npu:Npun_F0446"/>
<dbReference type="eggNOG" id="COG0773">
    <property type="taxonomic scope" value="Bacteria"/>
</dbReference>
<dbReference type="HOGENOM" id="CLU_028104_2_2_3"/>
<dbReference type="OrthoDB" id="9804126at2"/>
<dbReference type="PhylomeDB" id="B2J717"/>
<dbReference type="UniPathway" id="UPA00219"/>
<dbReference type="Proteomes" id="UP000001191">
    <property type="component" value="Chromosome"/>
</dbReference>
<dbReference type="GO" id="GO:0005737">
    <property type="term" value="C:cytoplasm"/>
    <property type="evidence" value="ECO:0007669"/>
    <property type="project" value="UniProtKB-SubCell"/>
</dbReference>
<dbReference type="GO" id="GO:0005524">
    <property type="term" value="F:ATP binding"/>
    <property type="evidence" value="ECO:0007669"/>
    <property type="project" value="UniProtKB-UniRule"/>
</dbReference>
<dbReference type="GO" id="GO:0008763">
    <property type="term" value="F:UDP-N-acetylmuramate-L-alanine ligase activity"/>
    <property type="evidence" value="ECO:0007669"/>
    <property type="project" value="UniProtKB-UniRule"/>
</dbReference>
<dbReference type="GO" id="GO:0051301">
    <property type="term" value="P:cell division"/>
    <property type="evidence" value="ECO:0007669"/>
    <property type="project" value="UniProtKB-KW"/>
</dbReference>
<dbReference type="GO" id="GO:0071555">
    <property type="term" value="P:cell wall organization"/>
    <property type="evidence" value="ECO:0007669"/>
    <property type="project" value="UniProtKB-KW"/>
</dbReference>
<dbReference type="GO" id="GO:0009252">
    <property type="term" value="P:peptidoglycan biosynthetic process"/>
    <property type="evidence" value="ECO:0007669"/>
    <property type="project" value="UniProtKB-UniRule"/>
</dbReference>
<dbReference type="GO" id="GO:0008360">
    <property type="term" value="P:regulation of cell shape"/>
    <property type="evidence" value="ECO:0007669"/>
    <property type="project" value="UniProtKB-KW"/>
</dbReference>
<dbReference type="Gene3D" id="3.90.190.20">
    <property type="entry name" value="Mur ligase, C-terminal domain"/>
    <property type="match status" value="1"/>
</dbReference>
<dbReference type="Gene3D" id="3.40.1190.10">
    <property type="entry name" value="Mur-like, catalytic domain"/>
    <property type="match status" value="1"/>
</dbReference>
<dbReference type="Gene3D" id="3.40.50.720">
    <property type="entry name" value="NAD(P)-binding Rossmann-like Domain"/>
    <property type="match status" value="1"/>
</dbReference>
<dbReference type="HAMAP" id="MF_00046">
    <property type="entry name" value="MurC"/>
    <property type="match status" value="1"/>
</dbReference>
<dbReference type="InterPro" id="IPR036565">
    <property type="entry name" value="Mur-like_cat_sf"/>
</dbReference>
<dbReference type="InterPro" id="IPR004101">
    <property type="entry name" value="Mur_ligase_C"/>
</dbReference>
<dbReference type="InterPro" id="IPR036615">
    <property type="entry name" value="Mur_ligase_C_dom_sf"/>
</dbReference>
<dbReference type="InterPro" id="IPR013221">
    <property type="entry name" value="Mur_ligase_cen"/>
</dbReference>
<dbReference type="InterPro" id="IPR000713">
    <property type="entry name" value="Mur_ligase_N"/>
</dbReference>
<dbReference type="InterPro" id="IPR050061">
    <property type="entry name" value="MurCDEF_pg_biosynth"/>
</dbReference>
<dbReference type="InterPro" id="IPR005758">
    <property type="entry name" value="UDP-N-AcMur_Ala_ligase_MurC"/>
</dbReference>
<dbReference type="NCBIfam" id="TIGR01082">
    <property type="entry name" value="murC"/>
    <property type="match status" value="1"/>
</dbReference>
<dbReference type="PANTHER" id="PTHR43445:SF3">
    <property type="entry name" value="UDP-N-ACETYLMURAMATE--L-ALANINE LIGASE"/>
    <property type="match status" value="1"/>
</dbReference>
<dbReference type="PANTHER" id="PTHR43445">
    <property type="entry name" value="UDP-N-ACETYLMURAMATE--L-ALANINE LIGASE-RELATED"/>
    <property type="match status" value="1"/>
</dbReference>
<dbReference type="Pfam" id="PF01225">
    <property type="entry name" value="Mur_ligase"/>
    <property type="match status" value="1"/>
</dbReference>
<dbReference type="Pfam" id="PF02875">
    <property type="entry name" value="Mur_ligase_C"/>
    <property type="match status" value="1"/>
</dbReference>
<dbReference type="Pfam" id="PF08245">
    <property type="entry name" value="Mur_ligase_M"/>
    <property type="match status" value="1"/>
</dbReference>
<dbReference type="SUPFAM" id="SSF51984">
    <property type="entry name" value="MurCD N-terminal domain"/>
    <property type="match status" value="1"/>
</dbReference>
<dbReference type="SUPFAM" id="SSF53623">
    <property type="entry name" value="MurD-like peptide ligases, catalytic domain"/>
    <property type="match status" value="1"/>
</dbReference>
<dbReference type="SUPFAM" id="SSF53244">
    <property type="entry name" value="MurD-like peptide ligases, peptide-binding domain"/>
    <property type="match status" value="1"/>
</dbReference>
<reference key="1">
    <citation type="journal article" date="2013" name="Plant Physiol.">
        <title>A Nostoc punctiforme Sugar Transporter Necessary to Establish a Cyanobacterium-Plant Symbiosis.</title>
        <authorList>
            <person name="Ekman M."/>
            <person name="Picossi S."/>
            <person name="Campbell E.L."/>
            <person name="Meeks J.C."/>
            <person name="Flores E."/>
        </authorList>
    </citation>
    <scope>NUCLEOTIDE SEQUENCE [LARGE SCALE GENOMIC DNA]</scope>
    <source>
        <strain>ATCC 29133 / PCC 73102</strain>
    </source>
</reference>
<accession>B2J717</accession>
<feature type="chain" id="PRO_1000091119" description="UDP-N-acetylmuramate--L-alanine ligase">
    <location>
        <begin position="1"/>
        <end position="481"/>
    </location>
</feature>
<feature type="binding site" evidence="1">
    <location>
        <begin position="135"/>
        <end position="141"/>
    </location>
    <ligand>
        <name>ATP</name>
        <dbReference type="ChEBI" id="CHEBI:30616"/>
    </ligand>
</feature>
<name>MURC_NOSP7</name>
<evidence type="ECO:0000255" key="1">
    <source>
        <dbReference type="HAMAP-Rule" id="MF_00046"/>
    </source>
</evidence>
<gene>
    <name evidence="1" type="primary">murC</name>
    <name type="ordered locus">Npun_F0446</name>
</gene>
<comment type="function">
    <text evidence="1">Cell wall formation.</text>
</comment>
<comment type="catalytic activity">
    <reaction evidence="1">
        <text>UDP-N-acetyl-alpha-D-muramate + L-alanine + ATP = UDP-N-acetyl-alpha-D-muramoyl-L-alanine + ADP + phosphate + H(+)</text>
        <dbReference type="Rhea" id="RHEA:23372"/>
        <dbReference type="ChEBI" id="CHEBI:15378"/>
        <dbReference type="ChEBI" id="CHEBI:30616"/>
        <dbReference type="ChEBI" id="CHEBI:43474"/>
        <dbReference type="ChEBI" id="CHEBI:57972"/>
        <dbReference type="ChEBI" id="CHEBI:70757"/>
        <dbReference type="ChEBI" id="CHEBI:83898"/>
        <dbReference type="ChEBI" id="CHEBI:456216"/>
        <dbReference type="EC" id="6.3.2.8"/>
    </reaction>
</comment>
<comment type="pathway">
    <text evidence="1">Cell wall biogenesis; peptidoglycan biosynthesis.</text>
</comment>
<comment type="subcellular location">
    <subcellularLocation>
        <location evidence="1">Cytoplasm</location>
    </subcellularLocation>
</comment>
<comment type="similarity">
    <text evidence="1">Belongs to the MurCDEF family.</text>
</comment>
<protein>
    <recommendedName>
        <fullName evidence="1">UDP-N-acetylmuramate--L-alanine ligase</fullName>
        <ecNumber evidence="1">6.3.2.8</ecNumber>
    </recommendedName>
    <alternativeName>
        <fullName evidence="1">UDP-N-acetylmuramoyl-L-alanine synthetase</fullName>
    </alternativeName>
</protein>
<proteinExistence type="inferred from homology"/>